<proteinExistence type="inferred from homology"/>
<reference key="1">
    <citation type="submission" date="2007-06" db="EMBL/GenBank/DDBJ databases">
        <title>Complete sequence of Methanococcus maripaludis C7.</title>
        <authorList>
            <consortium name="US DOE Joint Genome Institute"/>
            <person name="Copeland A."/>
            <person name="Lucas S."/>
            <person name="Lapidus A."/>
            <person name="Barry K."/>
            <person name="Glavina del Rio T."/>
            <person name="Dalin E."/>
            <person name="Tice H."/>
            <person name="Pitluck S."/>
            <person name="Clum A."/>
            <person name="Schmutz J."/>
            <person name="Larimer F."/>
            <person name="Land M."/>
            <person name="Hauser L."/>
            <person name="Kyrpides N."/>
            <person name="Anderson I."/>
            <person name="Sieprawska-Lupa M."/>
            <person name="Whitman W.B."/>
            <person name="Richardson P."/>
        </authorList>
    </citation>
    <scope>NUCLEOTIDE SEQUENCE [LARGE SCALE GENOMIC DNA]</scope>
    <source>
        <strain>C7 / ATCC BAA-1331</strain>
    </source>
</reference>
<sequence length="482" mass="54080">MEEWVEKYRPKSLNDVAGHNKTKESLIEWIESFINGQKQKPILLAGPPGSGKTTLAYAIAKDYAFDVIELNASDKRNKDVISQVVGTAATSKSLTGKRTLIVLDEVDGLSGNDDRGGVAEIIKVLKTAENPVILTANDVYKPALMTLRNSVNLINVGSVHTNSIPPVLRKIALKEGFEIDEKVIKTIASHAGGDLRAAINDLQSLATGGSIEVEDAKELPDRDSEKSIFDAMRIIMKTTHYDIATSATRDVKEELGTIEEWISENLPKEYLKYKDLANGYDYLSKSDVFLGRVFRRQYFGLWRYASALMTAGTALAKEEKYRGFTRYAPPAIFTKLSRTKGSRQRMKDILKKIALKTHTSTKRARNTLDYMVVVFESNEAVSAELVEYYELTKEEIEFLTNKTIAKNIFSVIAGKKPKVEKETPKKKKKAEDVVPIIPKRPKISEPPKEPLKEVIEETVEKTDKKEKEKKDPKKQATLDSFF</sequence>
<gene>
    <name evidence="1" type="primary">rfcL</name>
    <name type="ordered locus">MmarC7_1324</name>
</gene>
<organism>
    <name type="scientific">Methanococcus maripaludis (strain C7 / ATCC BAA-1331)</name>
    <dbReference type="NCBI Taxonomy" id="426368"/>
    <lineage>
        <taxon>Archaea</taxon>
        <taxon>Methanobacteriati</taxon>
        <taxon>Methanobacteriota</taxon>
        <taxon>Methanomada group</taxon>
        <taxon>Methanococci</taxon>
        <taxon>Methanococcales</taxon>
        <taxon>Methanococcaceae</taxon>
        <taxon>Methanococcus</taxon>
    </lineage>
</organism>
<keyword id="KW-0067">ATP-binding</keyword>
<keyword id="KW-0235">DNA replication</keyword>
<keyword id="KW-0547">Nucleotide-binding</keyword>
<accession>A6VIW1</accession>
<name>RFCL_METM7</name>
<comment type="function">
    <text evidence="1">Part of the RFC clamp loader complex which loads the PCNA sliding clamp onto DNA.</text>
</comment>
<comment type="subunit">
    <text evidence="1">Heteromultimer composed of small subunits (RfcS) and large subunits (RfcL).</text>
</comment>
<comment type="similarity">
    <text evidence="1">Belongs to the activator 1 small subunits family. RfcL subfamily.</text>
</comment>
<feature type="chain" id="PRO_0000318541" description="Replication factor C large subunit">
    <location>
        <begin position="1"/>
        <end position="482"/>
    </location>
</feature>
<feature type="region of interest" description="Disordered" evidence="2">
    <location>
        <begin position="420"/>
        <end position="482"/>
    </location>
</feature>
<feature type="compositionally biased region" description="Basic and acidic residues" evidence="2">
    <location>
        <begin position="442"/>
        <end position="476"/>
    </location>
</feature>
<feature type="binding site" evidence="1">
    <location>
        <begin position="46"/>
        <end position="53"/>
    </location>
    <ligand>
        <name>ATP</name>
        <dbReference type="ChEBI" id="CHEBI:30616"/>
    </ligand>
</feature>
<dbReference type="EMBL" id="CP000745">
    <property type="protein sequence ID" value="ABR66387.1"/>
    <property type="molecule type" value="Genomic_DNA"/>
</dbReference>
<dbReference type="SMR" id="A6VIW1"/>
<dbReference type="STRING" id="426368.MmarC7_1324"/>
<dbReference type="KEGG" id="mmz:MmarC7_1324"/>
<dbReference type="eggNOG" id="arCOG00470">
    <property type="taxonomic scope" value="Archaea"/>
</dbReference>
<dbReference type="HOGENOM" id="CLU_027255_1_0_2"/>
<dbReference type="OrthoDB" id="8658at2157"/>
<dbReference type="GO" id="GO:0005524">
    <property type="term" value="F:ATP binding"/>
    <property type="evidence" value="ECO:0007669"/>
    <property type="project" value="UniProtKB-UniRule"/>
</dbReference>
<dbReference type="GO" id="GO:0016887">
    <property type="term" value="F:ATP hydrolysis activity"/>
    <property type="evidence" value="ECO:0007669"/>
    <property type="project" value="InterPro"/>
</dbReference>
<dbReference type="GO" id="GO:0003689">
    <property type="term" value="F:DNA clamp loader activity"/>
    <property type="evidence" value="ECO:0007669"/>
    <property type="project" value="UniProtKB-UniRule"/>
</dbReference>
<dbReference type="GO" id="GO:0006260">
    <property type="term" value="P:DNA replication"/>
    <property type="evidence" value="ECO:0007669"/>
    <property type="project" value="UniProtKB-UniRule"/>
</dbReference>
<dbReference type="CDD" id="cd00009">
    <property type="entry name" value="AAA"/>
    <property type="match status" value="1"/>
</dbReference>
<dbReference type="CDD" id="cd18140">
    <property type="entry name" value="HLD_clamp_RFC"/>
    <property type="match status" value="1"/>
</dbReference>
<dbReference type="Gene3D" id="1.10.8.60">
    <property type="match status" value="1"/>
</dbReference>
<dbReference type="Gene3D" id="3.40.50.300">
    <property type="entry name" value="P-loop containing nucleotide triphosphate hydrolases"/>
    <property type="match status" value="1"/>
</dbReference>
<dbReference type="HAMAP" id="MF_01508">
    <property type="entry name" value="RfcL"/>
    <property type="match status" value="1"/>
</dbReference>
<dbReference type="InterPro" id="IPR003593">
    <property type="entry name" value="AAA+_ATPase"/>
</dbReference>
<dbReference type="InterPro" id="IPR003959">
    <property type="entry name" value="ATPase_AAA_core"/>
</dbReference>
<dbReference type="InterPro" id="IPR027417">
    <property type="entry name" value="P-loop_NTPase"/>
</dbReference>
<dbReference type="InterPro" id="IPR023935">
    <property type="entry name" value="Rep_factor-C_lsu"/>
</dbReference>
<dbReference type="InterPro" id="IPR047854">
    <property type="entry name" value="RFC_lid"/>
</dbReference>
<dbReference type="NCBIfam" id="NF003229">
    <property type="entry name" value="PRK04195.1-5"/>
    <property type="match status" value="1"/>
</dbReference>
<dbReference type="NCBIfam" id="NF003230">
    <property type="entry name" value="PRK04195.1-6"/>
    <property type="match status" value="1"/>
</dbReference>
<dbReference type="PANTHER" id="PTHR23389">
    <property type="entry name" value="CHROMOSOME TRANSMISSION FIDELITY FACTOR 18"/>
    <property type="match status" value="1"/>
</dbReference>
<dbReference type="PANTHER" id="PTHR23389:SF6">
    <property type="entry name" value="REPLICATION FACTOR C SUBUNIT 1"/>
    <property type="match status" value="1"/>
</dbReference>
<dbReference type="Pfam" id="PF00004">
    <property type="entry name" value="AAA"/>
    <property type="match status" value="1"/>
</dbReference>
<dbReference type="Pfam" id="PF21960">
    <property type="entry name" value="RCF1-5-like_lid"/>
    <property type="match status" value="1"/>
</dbReference>
<dbReference type="SMART" id="SM00382">
    <property type="entry name" value="AAA"/>
    <property type="match status" value="1"/>
</dbReference>
<dbReference type="SUPFAM" id="SSF52540">
    <property type="entry name" value="P-loop containing nucleoside triphosphate hydrolases"/>
    <property type="match status" value="1"/>
</dbReference>
<evidence type="ECO:0000255" key="1">
    <source>
        <dbReference type="HAMAP-Rule" id="MF_01508"/>
    </source>
</evidence>
<evidence type="ECO:0000256" key="2">
    <source>
        <dbReference type="SAM" id="MobiDB-lite"/>
    </source>
</evidence>
<protein>
    <recommendedName>
        <fullName evidence="1">Replication factor C large subunit</fullName>
        <shortName evidence="1">RFC large subunit</shortName>
    </recommendedName>
    <alternativeName>
        <fullName evidence="1">Clamp loader large subunit</fullName>
    </alternativeName>
</protein>